<evidence type="ECO:0000255" key="1">
    <source>
        <dbReference type="HAMAP-Rule" id="MF_00096"/>
    </source>
</evidence>
<evidence type="ECO:0000256" key="2">
    <source>
        <dbReference type="SAM" id="MobiDB-lite"/>
    </source>
</evidence>
<evidence type="ECO:0000305" key="3"/>
<feature type="chain" id="PRO_0000115121" description="DNA mismatch repair protein MutS">
    <location>
        <begin position="1"/>
        <end position="855"/>
    </location>
</feature>
<feature type="region of interest" description="Disordered" evidence="2">
    <location>
        <begin position="796"/>
        <end position="816"/>
    </location>
</feature>
<feature type="binding site" evidence="1">
    <location>
        <begin position="613"/>
        <end position="620"/>
    </location>
    <ligand>
        <name>ATP</name>
        <dbReference type="ChEBI" id="CHEBI:30616"/>
    </ligand>
</feature>
<feature type="sequence conflict" description="In Ref. 1; AAF36440." evidence="3" ref="1">
    <original>VD</original>
    <variation>AV</variation>
    <location>
        <begin position="649"/>
        <end position="650"/>
    </location>
</feature>
<feature type="sequence conflict" description="In Ref. 1; AAF36440." evidence="3" ref="1">
    <original>A</original>
    <variation>T</variation>
    <location>
        <position position="781"/>
    </location>
</feature>
<name>MUTS_PSEAE</name>
<dbReference type="EMBL" id="AF126491">
    <property type="protein sequence ID" value="AAF36440.1"/>
    <property type="molecule type" value="Genomic_DNA"/>
</dbReference>
<dbReference type="EMBL" id="AF220055">
    <property type="protein sequence ID" value="AAF42850.1"/>
    <property type="molecule type" value="Genomic_DNA"/>
</dbReference>
<dbReference type="EMBL" id="AE004091">
    <property type="protein sequence ID" value="AAG07008.1"/>
    <property type="molecule type" value="Genomic_DNA"/>
</dbReference>
<dbReference type="PIR" id="B83193">
    <property type="entry name" value="B83193"/>
</dbReference>
<dbReference type="RefSeq" id="NP_252310.1">
    <property type="nucleotide sequence ID" value="NC_002516.2"/>
</dbReference>
<dbReference type="RefSeq" id="WP_003113873.1">
    <property type="nucleotide sequence ID" value="NZ_QZGE01000001.1"/>
</dbReference>
<dbReference type="SMR" id="Q9HY08"/>
<dbReference type="FunCoup" id="Q9HY08">
    <property type="interactions" value="589"/>
</dbReference>
<dbReference type="STRING" id="208964.PA3620"/>
<dbReference type="PaxDb" id="208964-PA3620"/>
<dbReference type="GeneID" id="880229"/>
<dbReference type="KEGG" id="pae:PA3620"/>
<dbReference type="PATRIC" id="fig|208964.12.peg.3789"/>
<dbReference type="PseudoCAP" id="PA3620"/>
<dbReference type="HOGENOM" id="CLU_002472_4_0_6"/>
<dbReference type="InParanoid" id="Q9HY08"/>
<dbReference type="OrthoDB" id="9802448at2"/>
<dbReference type="PhylomeDB" id="Q9HY08"/>
<dbReference type="BioCyc" id="PAER208964:G1FZ6-3689-MONOMER"/>
<dbReference type="Proteomes" id="UP000002438">
    <property type="component" value="Chromosome"/>
</dbReference>
<dbReference type="GO" id="GO:0005829">
    <property type="term" value="C:cytosol"/>
    <property type="evidence" value="ECO:0000318"/>
    <property type="project" value="GO_Central"/>
</dbReference>
<dbReference type="GO" id="GO:0005524">
    <property type="term" value="F:ATP binding"/>
    <property type="evidence" value="ECO:0007669"/>
    <property type="project" value="UniProtKB-UniRule"/>
</dbReference>
<dbReference type="GO" id="GO:0140664">
    <property type="term" value="F:ATP-dependent DNA damage sensor activity"/>
    <property type="evidence" value="ECO:0007669"/>
    <property type="project" value="InterPro"/>
</dbReference>
<dbReference type="GO" id="GO:0003684">
    <property type="term" value="F:damaged DNA binding"/>
    <property type="evidence" value="ECO:0007669"/>
    <property type="project" value="UniProtKB-UniRule"/>
</dbReference>
<dbReference type="GO" id="GO:0030983">
    <property type="term" value="F:mismatched DNA binding"/>
    <property type="evidence" value="ECO:0000318"/>
    <property type="project" value="GO_Central"/>
</dbReference>
<dbReference type="GO" id="GO:0006298">
    <property type="term" value="P:mismatch repair"/>
    <property type="evidence" value="ECO:0000318"/>
    <property type="project" value="GO_Central"/>
</dbReference>
<dbReference type="CDD" id="cd03284">
    <property type="entry name" value="ABC_MutS1"/>
    <property type="match status" value="1"/>
</dbReference>
<dbReference type="FunFam" id="1.10.1420.10:FF:000002">
    <property type="entry name" value="DNA mismatch repair protein MutS"/>
    <property type="match status" value="1"/>
</dbReference>
<dbReference type="FunFam" id="3.30.420.110:FF:000001">
    <property type="entry name" value="DNA mismatch repair protein MutS"/>
    <property type="match status" value="1"/>
</dbReference>
<dbReference type="FunFam" id="3.40.1170.10:FF:000001">
    <property type="entry name" value="DNA mismatch repair protein MutS"/>
    <property type="match status" value="1"/>
</dbReference>
<dbReference type="FunFam" id="3.40.50.300:FF:000283">
    <property type="entry name" value="DNA mismatch repair protein MutS"/>
    <property type="match status" value="1"/>
</dbReference>
<dbReference type="Gene3D" id="1.10.1420.10">
    <property type="match status" value="2"/>
</dbReference>
<dbReference type="Gene3D" id="6.10.140.430">
    <property type="match status" value="1"/>
</dbReference>
<dbReference type="Gene3D" id="3.40.1170.10">
    <property type="entry name" value="DNA repair protein MutS, domain I"/>
    <property type="match status" value="1"/>
</dbReference>
<dbReference type="Gene3D" id="3.30.420.110">
    <property type="entry name" value="MutS, connector domain"/>
    <property type="match status" value="1"/>
</dbReference>
<dbReference type="Gene3D" id="3.40.50.300">
    <property type="entry name" value="P-loop containing nucleotide triphosphate hydrolases"/>
    <property type="match status" value="1"/>
</dbReference>
<dbReference type="HAMAP" id="MF_00096">
    <property type="entry name" value="MutS"/>
    <property type="match status" value="1"/>
</dbReference>
<dbReference type="InterPro" id="IPR005748">
    <property type="entry name" value="DNA_mismatch_repair_MutS"/>
</dbReference>
<dbReference type="InterPro" id="IPR007695">
    <property type="entry name" value="DNA_mismatch_repair_MutS-lik_N"/>
</dbReference>
<dbReference type="InterPro" id="IPR017261">
    <property type="entry name" value="DNA_mismatch_repair_MutS/MSH"/>
</dbReference>
<dbReference type="InterPro" id="IPR000432">
    <property type="entry name" value="DNA_mismatch_repair_MutS_C"/>
</dbReference>
<dbReference type="InterPro" id="IPR007861">
    <property type="entry name" value="DNA_mismatch_repair_MutS_clamp"/>
</dbReference>
<dbReference type="InterPro" id="IPR007696">
    <property type="entry name" value="DNA_mismatch_repair_MutS_core"/>
</dbReference>
<dbReference type="InterPro" id="IPR016151">
    <property type="entry name" value="DNA_mismatch_repair_MutS_N"/>
</dbReference>
<dbReference type="InterPro" id="IPR036187">
    <property type="entry name" value="DNA_mismatch_repair_MutS_sf"/>
</dbReference>
<dbReference type="InterPro" id="IPR007860">
    <property type="entry name" value="DNA_mmatch_repair_MutS_con_dom"/>
</dbReference>
<dbReference type="InterPro" id="IPR045076">
    <property type="entry name" value="MutS"/>
</dbReference>
<dbReference type="InterPro" id="IPR036678">
    <property type="entry name" value="MutS_con_dom_sf"/>
</dbReference>
<dbReference type="InterPro" id="IPR027417">
    <property type="entry name" value="P-loop_NTPase"/>
</dbReference>
<dbReference type="NCBIfam" id="TIGR01070">
    <property type="entry name" value="mutS1"/>
    <property type="match status" value="1"/>
</dbReference>
<dbReference type="NCBIfam" id="NF003810">
    <property type="entry name" value="PRK05399.1"/>
    <property type="match status" value="1"/>
</dbReference>
<dbReference type="PANTHER" id="PTHR11361:SF34">
    <property type="entry name" value="DNA MISMATCH REPAIR PROTEIN MSH1, MITOCHONDRIAL"/>
    <property type="match status" value="1"/>
</dbReference>
<dbReference type="PANTHER" id="PTHR11361">
    <property type="entry name" value="DNA MISMATCH REPAIR PROTEIN MUTS FAMILY MEMBER"/>
    <property type="match status" value="1"/>
</dbReference>
<dbReference type="Pfam" id="PF01624">
    <property type="entry name" value="MutS_I"/>
    <property type="match status" value="1"/>
</dbReference>
<dbReference type="Pfam" id="PF05188">
    <property type="entry name" value="MutS_II"/>
    <property type="match status" value="1"/>
</dbReference>
<dbReference type="Pfam" id="PF05192">
    <property type="entry name" value="MutS_III"/>
    <property type="match status" value="1"/>
</dbReference>
<dbReference type="Pfam" id="PF05190">
    <property type="entry name" value="MutS_IV"/>
    <property type="match status" value="1"/>
</dbReference>
<dbReference type="Pfam" id="PF00488">
    <property type="entry name" value="MutS_V"/>
    <property type="match status" value="1"/>
</dbReference>
<dbReference type="PIRSF" id="PIRSF037677">
    <property type="entry name" value="DNA_mis_repair_Msh6"/>
    <property type="match status" value="1"/>
</dbReference>
<dbReference type="SMART" id="SM00534">
    <property type="entry name" value="MUTSac"/>
    <property type="match status" value="1"/>
</dbReference>
<dbReference type="SMART" id="SM00533">
    <property type="entry name" value="MUTSd"/>
    <property type="match status" value="1"/>
</dbReference>
<dbReference type="SUPFAM" id="SSF55271">
    <property type="entry name" value="DNA repair protein MutS, domain I"/>
    <property type="match status" value="1"/>
</dbReference>
<dbReference type="SUPFAM" id="SSF53150">
    <property type="entry name" value="DNA repair protein MutS, domain II"/>
    <property type="match status" value="1"/>
</dbReference>
<dbReference type="SUPFAM" id="SSF48334">
    <property type="entry name" value="DNA repair protein MutS, domain III"/>
    <property type="match status" value="1"/>
</dbReference>
<dbReference type="SUPFAM" id="SSF52540">
    <property type="entry name" value="P-loop containing nucleoside triphosphate hydrolases"/>
    <property type="match status" value="1"/>
</dbReference>
<dbReference type="PROSITE" id="PS00486">
    <property type="entry name" value="DNA_MISMATCH_REPAIR_2"/>
    <property type="match status" value="1"/>
</dbReference>
<organism>
    <name type="scientific">Pseudomonas aeruginosa (strain ATCC 15692 / DSM 22644 / CIP 104116 / JCM 14847 / LMG 12228 / 1C / PRS 101 / PAO1)</name>
    <dbReference type="NCBI Taxonomy" id="208964"/>
    <lineage>
        <taxon>Bacteria</taxon>
        <taxon>Pseudomonadati</taxon>
        <taxon>Pseudomonadota</taxon>
        <taxon>Gammaproteobacteria</taxon>
        <taxon>Pseudomonadales</taxon>
        <taxon>Pseudomonadaceae</taxon>
        <taxon>Pseudomonas</taxon>
    </lineage>
</organism>
<gene>
    <name evidence="1" type="primary">mutS</name>
    <name type="ordered locus">PA3620</name>
</gene>
<protein>
    <recommendedName>
        <fullName evidence="1">DNA mismatch repair protein MutS</fullName>
    </recommendedName>
</protein>
<comment type="function">
    <text evidence="1">This protein is involved in the repair of mismatches in DNA. It is possible that it carries out the mismatch recognition step. This protein has a weak ATPase activity.</text>
</comment>
<comment type="similarity">
    <text evidence="1">Belongs to the DNA mismatch repair MutS family.</text>
</comment>
<proteinExistence type="inferred from homology"/>
<accession>Q9HY08</accession>
<accession>Q9L7T5</accession>
<accession>Q9LAN6</accession>
<sequence>MTDLSQHTPMMQQYFKLKHQHPDQLMFYRMGDFYELFYEDAKKAAKLLDITLTARGQSGGKAIPMAGIPFHSAEGYLAKLVKLGESVAICEQIGDPATSKGPVERQVVRIITPGTVSDEALLDERRDNLLAAILGDERLFGLAVLDITSGRFSVQEIKGWETLLAELERLNPAELLIPDDWPQGLPAEKRRGVRRRAPWDFDRDSAHKSLCQQFGTQDLKGFGCQNLTLAIGAAGCLLAYAKETQRTALPHLRSLRHDRLDDTVILDGASRRNLELDINLSGGRENTLQSVVDRCQTAMASRLMSRWLNRPLRDRAVLEARQESIACLLERYRFENLQPQLKEIGDLERILARIGLRNARPRDLARLRDALAALPDLQNAMTELEAPHLQALATTIGTYPELAELLAKAIIDNPPAVIRDGGVIKTGYDAELDELQALSENAGQFLMDLEAREKARTGLPNLKVGYNRIHGYFIELPRVQAEQAPADYIRRQTLKGAERFITPELKAFEDKALSAQSRALAREKALYEELLERLIGHLAPLQDSASALAELDVLANLAERALNLDLNRPRFVEHTCLHIEQGRHPVVEQVLETPFVANDLALDADTRMLVITGPNMGGKSTYMRQTALIVLLAHIGSFVPAARCELSLVDRIFTRIGSSDDLAGGRSTFMVEMSETANILHNATDKSLVLMDEVGRGTSTFDGLSLAWAAAEDLARTRAFTLFATHYFELTVLPESQPAVANVHLNATEHNERIVFLHHVLPGPASQSYGLAVAQLAGVPAPVIQRAREHLKRLETTSLPHEMPSQQSGKPASPMQSDLFASLPHPVIDELSRINPDDISPRQALDLLYAWKMRV</sequence>
<keyword id="KW-0067">ATP-binding</keyword>
<keyword id="KW-0227">DNA damage</keyword>
<keyword id="KW-0234">DNA repair</keyword>
<keyword id="KW-0238">DNA-binding</keyword>
<keyword id="KW-0547">Nucleotide-binding</keyword>
<keyword id="KW-1185">Reference proteome</keyword>
<reference key="1">
    <citation type="submission" date="1999-02" db="EMBL/GenBank/DDBJ databases">
        <title>Cloning and nucleotide sequence of Pseudomonas aeruginosa MutS gene.</title>
        <authorList>
            <person name="Pezza R.J."/>
            <person name="Smania A.M."/>
            <person name="Argarana C.E."/>
        </authorList>
    </citation>
    <scope>NUCLEOTIDE SEQUENCE [GENOMIC DNA]</scope>
    <source>
        <strain>Hex1T</strain>
    </source>
</reference>
<reference key="2">
    <citation type="submission" date="1999-12" db="EMBL/GenBank/DDBJ databases">
        <title>Cloning and sequencing of mutS gene from Pseudomonas aeruginosa.</title>
        <authorList>
            <person name="Blazquez J."/>
        </authorList>
    </citation>
    <scope>NUCLEOTIDE SEQUENCE [GENOMIC DNA]</scope>
    <source>
        <strain>ATCC 15692 / DSM 22644 / CIP 104116 / JCM 14847 / LMG 12228 / 1C / PRS 101 / PAO1</strain>
    </source>
</reference>
<reference key="3">
    <citation type="journal article" date="2000" name="Nature">
        <title>Complete genome sequence of Pseudomonas aeruginosa PAO1, an opportunistic pathogen.</title>
        <authorList>
            <person name="Stover C.K."/>
            <person name="Pham X.-Q.T."/>
            <person name="Erwin A.L."/>
            <person name="Mizoguchi S.D."/>
            <person name="Warrener P."/>
            <person name="Hickey M.J."/>
            <person name="Brinkman F.S.L."/>
            <person name="Hufnagle W.O."/>
            <person name="Kowalik D.J."/>
            <person name="Lagrou M."/>
            <person name="Garber R.L."/>
            <person name="Goltry L."/>
            <person name="Tolentino E."/>
            <person name="Westbrock-Wadman S."/>
            <person name="Yuan Y."/>
            <person name="Brody L.L."/>
            <person name="Coulter S.N."/>
            <person name="Folger K.R."/>
            <person name="Kas A."/>
            <person name="Larbig K."/>
            <person name="Lim R.M."/>
            <person name="Smith K.A."/>
            <person name="Spencer D.H."/>
            <person name="Wong G.K.-S."/>
            <person name="Wu Z."/>
            <person name="Paulsen I.T."/>
            <person name="Reizer J."/>
            <person name="Saier M.H. Jr."/>
            <person name="Hancock R.E.W."/>
            <person name="Lory S."/>
            <person name="Olson M.V."/>
        </authorList>
    </citation>
    <scope>NUCLEOTIDE SEQUENCE [LARGE SCALE GENOMIC DNA]</scope>
    <source>
        <strain>ATCC 15692 / DSM 22644 / CIP 104116 / JCM 14847 / LMG 12228 / 1C / PRS 101 / PAO1</strain>
    </source>
</reference>